<keyword id="KW-0413">Isomerase</keyword>
<keyword id="KW-0819">tRNA processing</keyword>
<organism>
    <name type="scientific">Brucella suis (strain ATCC 23445 / NCTC 10510)</name>
    <dbReference type="NCBI Taxonomy" id="470137"/>
    <lineage>
        <taxon>Bacteria</taxon>
        <taxon>Pseudomonadati</taxon>
        <taxon>Pseudomonadota</taxon>
        <taxon>Alphaproteobacteria</taxon>
        <taxon>Hyphomicrobiales</taxon>
        <taxon>Brucellaceae</taxon>
        <taxon>Brucella/Ochrobactrum group</taxon>
        <taxon>Brucella</taxon>
    </lineage>
</organism>
<name>TRUB_BRUSI</name>
<proteinExistence type="inferred from homology"/>
<reference key="1">
    <citation type="submission" date="2007-12" db="EMBL/GenBank/DDBJ databases">
        <title>Brucella suis ATCC 23445 whole genome shotgun sequencing project.</title>
        <authorList>
            <person name="Setubal J.C."/>
            <person name="Bowns C."/>
            <person name="Boyle S."/>
            <person name="Crasta O.R."/>
            <person name="Czar M.J."/>
            <person name="Dharmanolla C."/>
            <person name="Gillespie J.J."/>
            <person name="Kenyon R.W."/>
            <person name="Lu J."/>
            <person name="Mane S."/>
            <person name="Mohapatra S."/>
            <person name="Nagrani S."/>
            <person name="Purkayastha A."/>
            <person name="Rajasimha H.K."/>
            <person name="Shallom J.M."/>
            <person name="Shallom S."/>
            <person name="Shukla M."/>
            <person name="Snyder E.E."/>
            <person name="Sobral B.W."/>
            <person name="Wattam A.R."/>
            <person name="Will R."/>
            <person name="Williams K."/>
            <person name="Yoo H."/>
            <person name="Bruce D."/>
            <person name="Detter C."/>
            <person name="Munk C."/>
            <person name="Brettin T.S."/>
        </authorList>
    </citation>
    <scope>NUCLEOTIDE SEQUENCE [LARGE SCALE GENOMIC DNA]</scope>
    <source>
        <strain>ATCC 23445 / NCTC 10510</strain>
    </source>
</reference>
<sequence>MARRGKKKGRPISGWVIFDKPKGMGSTEAVSKIKWLFSAEKAGHAGTLDPLASGMLPIALGEATKTVPYVMDGTKVYRFTVTWGEERSTDDLEGQPTKTSDKRPSREEVEALLPDYTGVISQVPPQFSAIKIDGERAYDLAREGETVEIPAREVEIDRLEIVGFPDADRTEFEVECSKGTYVRSLARDMGRDLGCYGHISDLRRVEVAPFTDEDMVTLAKLEAVWPPLPPKDEDGNVIEPAPRRDFSALDALVIDTGAALDCLPQVPLSDDQAQRVRLGNPVILRGRDAPLEADEACVTTRGKLLAIGYIEHGQFKPKRVFTAG</sequence>
<dbReference type="EC" id="5.4.99.25" evidence="1"/>
<dbReference type="EMBL" id="CP000911">
    <property type="protein sequence ID" value="ABY39014.1"/>
    <property type="molecule type" value="Genomic_DNA"/>
</dbReference>
<dbReference type="RefSeq" id="WP_002965229.1">
    <property type="nucleotide sequence ID" value="NC_010169.1"/>
</dbReference>
<dbReference type="SMR" id="B0CK13"/>
<dbReference type="GeneID" id="93017531"/>
<dbReference type="KEGG" id="bmt:BSUIS_A2004"/>
<dbReference type="HOGENOM" id="CLU_032087_0_3_5"/>
<dbReference type="Proteomes" id="UP000008545">
    <property type="component" value="Chromosome I"/>
</dbReference>
<dbReference type="GO" id="GO:0003723">
    <property type="term" value="F:RNA binding"/>
    <property type="evidence" value="ECO:0007669"/>
    <property type="project" value="InterPro"/>
</dbReference>
<dbReference type="GO" id="GO:0160148">
    <property type="term" value="F:tRNA pseudouridine(55) synthase activity"/>
    <property type="evidence" value="ECO:0007669"/>
    <property type="project" value="UniProtKB-EC"/>
</dbReference>
<dbReference type="GO" id="GO:1990481">
    <property type="term" value="P:mRNA pseudouridine synthesis"/>
    <property type="evidence" value="ECO:0007669"/>
    <property type="project" value="TreeGrafter"/>
</dbReference>
<dbReference type="GO" id="GO:0031119">
    <property type="term" value="P:tRNA pseudouridine synthesis"/>
    <property type="evidence" value="ECO:0007669"/>
    <property type="project" value="UniProtKB-UniRule"/>
</dbReference>
<dbReference type="CDD" id="cd02573">
    <property type="entry name" value="PseudoU_synth_EcTruB"/>
    <property type="match status" value="1"/>
</dbReference>
<dbReference type="Gene3D" id="3.30.2350.10">
    <property type="entry name" value="Pseudouridine synthase"/>
    <property type="match status" value="1"/>
</dbReference>
<dbReference type="HAMAP" id="MF_01080">
    <property type="entry name" value="TruB_bact"/>
    <property type="match status" value="1"/>
</dbReference>
<dbReference type="InterPro" id="IPR020103">
    <property type="entry name" value="PsdUridine_synth_cat_dom_sf"/>
</dbReference>
<dbReference type="InterPro" id="IPR002501">
    <property type="entry name" value="PsdUridine_synth_N"/>
</dbReference>
<dbReference type="InterPro" id="IPR014780">
    <property type="entry name" value="tRNA_psdUridine_synth_TruB"/>
</dbReference>
<dbReference type="InterPro" id="IPR015240">
    <property type="entry name" value="tRNA_sdUridine_synth_fam1_C"/>
</dbReference>
<dbReference type="InterPro" id="IPR032819">
    <property type="entry name" value="TruB_C"/>
</dbReference>
<dbReference type="NCBIfam" id="TIGR00431">
    <property type="entry name" value="TruB"/>
    <property type="match status" value="1"/>
</dbReference>
<dbReference type="PANTHER" id="PTHR13767:SF2">
    <property type="entry name" value="PSEUDOURIDYLATE SYNTHASE TRUB1"/>
    <property type="match status" value="1"/>
</dbReference>
<dbReference type="PANTHER" id="PTHR13767">
    <property type="entry name" value="TRNA-PSEUDOURIDINE SYNTHASE"/>
    <property type="match status" value="1"/>
</dbReference>
<dbReference type="Pfam" id="PF09157">
    <property type="entry name" value="TruB-C_2"/>
    <property type="match status" value="1"/>
</dbReference>
<dbReference type="Pfam" id="PF16198">
    <property type="entry name" value="TruB_C_2"/>
    <property type="match status" value="1"/>
</dbReference>
<dbReference type="Pfam" id="PF01509">
    <property type="entry name" value="TruB_N"/>
    <property type="match status" value="1"/>
</dbReference>
<dbReference type="SUPFAM" id="SSF55120">
    <property type="entry name" value="Pseudouridine synthase"/>
    <property type="match status" value="1"/>
</dbReference>
<accession>B0CK13</accession>
<feature type="chain" id="PRO_1000084557" description="tRNA pseudouridine synthase B">
    <location>
        <begin position="1"/>
        <end position="324"/>
    </location>
</feature>
<feature type="region of interest" description="Disordered" evidence="2">
    <location>
        <begin position="87"/>
        <end position="107"/>
    </location>
</feature>
<feature type="active site" description="Nucleophile" evidence="1">
    <location>
        <position position="49"/>
    </location>
</feature>
<gene>
    <name evidence="1" type="primary">truB</name>
    <name type="ordered locus">BSUIS_A2004</name>
</gene>
<comment type="function">
    <text evidence="1">Responsible for synthesis of pseudouridine from uracil-55 in the psi GC loop of transfer RNAs.</text>
</comment>
<comment type="catalytic activity">
    <reaction evidence="1">
        <text>uridine(55) in tRNA = pseudouridine(55) in tRNA</text>
        <dbReference type="Rhea" id="RHEA:42532"/>
        <dbReference type="Rhea" id="RHEA-COMP:10101"/>
        <dbReference type="Rhea" id="RHEA-COMP:10102"/>
        <dbReference type="ChEBI" id="CHEBI:65314"/>
        <dbReference type="ChEBI" id="CHEBI:65315"/>
        <dbReference type="EC" id="5.4.99.25"/>
    </reaction>
</comment>
<comment type="similarity">
    <text evidence="1">Belongs to the pseudouridine synthase TruB family. Type 1 subfamily.</text>
</comment>
<protein>
    <recommendedName>
        <fullName evidence="1">tRNA pseudouridine synthase B</fullName>
        <ecNumber evidence="1">5.4.99.25</ecNumber>
    </recommendedName>
    <alternativeName>
        <fullName evidence="1">tRNA pseudouridine(55) synthase</fullName>
        <shortName evidence="1">Psi55 synthase</shortName>
    </alternativeName>
    <alternativeName>
        <fullName evidence="1">tRNA pseudouridylate synthase</fullName>
    </alternativeName>
    <alternativeName>
        <fullName evidence="1">tRNA-uridine isomerase</fullName>
    </alternativeName>
</protein>
<evidence type="ECO:0000255" key="1">
    <source>
        <dbReference type="HAMAP-Rule" id="MF_01080"/>
    </source>
</evidence>
<evidence type="ECO:0000256" key="2">
    <source>
        <dbReference type="SAM" id="MobiDB-lite"/>
    </source>
</evidence>